<accession>Q58055</accession>
<sequence>MKEVKDFYDKWEPEDFPNYIKLLMNFADELIFEEISLLLKKFENKKDFLVLDCGCGFGAFYNLTKDFNTIYLDISLNLLKRFKLKERKICANILHLPFKDNTFDLVLCINVLEHVNYLKALNEIRRILKNKGKLIVVVVNKDSLIKEEIFNDFKIFHKPLSIKDFEIDGFKIVYSNSVYFLPSIFKISPPIILSKIIEYWKPVDKKLSKIFKNKGQFLIIEMVKE</sequence>
<name>Y638_METJA</name>
<protein>
    <recommendedName>
        <fullName>Uncharacterized protein MJ0638</fullName>
    </recommendedName>
</protein>
<dbReference type="EMBL" id="L77117">
    <property type="protein sequence ID" value="AAB98634.1"/>
    <property type="molecule type" value="Genomic_DNA"/>
</dbReference>
<dbReference type="PIR" id="F64379">
    <property type="entry name" value="F64379"/>
</dbReference>
<dbReference type="RefSeq" id="WP_010870143.1">
    <property type="nucleotide sequence ID" value="NC_000909.1"/>
</dbReference>
<dbReference type="STRING" id="243232.MJ_0638"/>
<dbReference type="PaxDb" id="243232-MJ_0638"/>
<dbReference type="EnsemblBacteria" id="AAB98634">
    <property type="protein sequence ID" value="AAB98634"/>
    <property type="gene ID" value="MJ_0638"/>
</dbReference>
<dbReference type="GeneID" id="1451504"/>
<dbReference type="KEGG" id="mja:MJ_0638"/>
<dbReference type="eggNOG" id="arCOG01789">
    <property type="taxonomic scope" value="Archaea"/>
</dbReference>
<dbReference type="HOGENOM" id="CLU_084119_0_0_2"/>
<dbReference type="InParanoid" id="Q58055"/>
<dbReference type="OrthoDB" id="1018at2157"/>
<dbReference type="PhylomeDB" id="Q58055"/>
<dbReference type="Proteomes" id="UP000000805">
    <property type="component" value="Chromosome"/>
</dbReference>
<dbReference type="GO" id="GO:0008168">
    <property type="term" value="F:methyltransferase activity"/>
    <property type="evidence" value="ECO:0000318"/>
    <property type="project" value="GO_Central"/>
</dbReference>
<dbReference type="GO" id="GO:0008757">
    <property type="term" value="F:S-adenosylmethionine-dependent methyltransferase activity"/>
    <property type="evidence" value="ECO:0007669"/>
    <property type="project" value="InterPro"/>
</dbReference>
<dbReference type="CDD" id="cd02440">
    <property type="entry name" value="AdoMet_MTases"/>
    <property type="match status" value="1"/>
</dbReference>
<dbReference type="Gene3D" id="3.40.50.150">
    <property type="entry name" value="Vaccinia Virus protein VP39"/>
    <property type="match status" value="1"/>
</dbReference>
<dbReference type="InterPro" id="IPR013216">
    <property type="entry name" value="Methyltransf_11"/>
</dbReference>
<dbReference type="InterPro" id="IPR029063">
    <property type="entry name" value="SAM-dependent_MTases_sf"/>
</dbReference>
<dbReference type="PANTHER" id="PTHR43591:SF24">
    <property type="entry name" value="2-METHOXY-6-POLYPRENYL-1,4-BENZOQUINOL METHYLASE, MITOCHONDRIAL"/>
    <property type="match status" value="1"/>
</dbReference>
<dbReference type="PANTHER" id="PTHR43591">
    <property type="entry name" value="METHYLTRANSFERASE"/>
    <property type="match status" value="1"/>
</dbReference>
<dbReference type="Pfam" id="PF08241">
    <property type="entry name" value="Methyltransf_11"/>
    <property type="match status" value="1"/>
</dbReference>
<dbReference type="SUPFAM" id="SSF53335">
    <property type="entry name" value="S-adenosyl-L-methionine-dependent methyltransferases"/>
    <property type="match status" value="1"/>
</dbReference>
<feature type="chain" id="PRO_0000106965" description="Uncharacterized protein MJ0638">
    <location>
        <begin position="1"/>
        <end position="225"/>
    </location>
</feature>
<reference key="1">
    <citation type="journal article" date="1996" name="Science">
        <title>Complete genome sequence of the methanogenic archaeon, Methanococcus jannaschii.</title>
        <authorList>
            <person name="Bult C.J."/>
            <person name="White O."/>
            <person name="Olsen G.J."/>
            <person name="Zhou L."/>
            <person name="Fleischmann R.D."/>
            <person name="Sutton G.G."/>
            <person name="Blake J.A."/>
            <person name="FitzGerald L.M."/>
            <person name="Clayton R.A."/>
            <person name="Gocayne J.D."/>
            <person name="Kerlavage A.R."/>
            <person name="Dougherty B.A."/>
            <person name="Tomb J.-F."/>
            <person name="Adams M.D."/>
            <person name="Reich C.I."/>
            <person name="Overbeek R."/>
            <person name="Kirkness E.F."/>
            <person name="Weinstock K.G."/>
            <person name="Merrick J.M."/>
            <person name="Glodek A."/>
            <person name="Scott J.L."/>
            <person name="Geoghagen N.S.M."/>
            <person name="Weidman J.F."/>
            <person name="Fuhrmann J.L."/>
            <person name="Nguyen D."/>
            <person name="Utterback T.R."/>
            <person name="Kelley J.M."/>
            <person name="Peterson J.D."/>
            <person name="Sadow P.W."/>
            <person name="Hanna M.C."/>
            <person name="Cotton M.D."/>
            <person name="Roberts K.M."/>
            <person name="Hurst M.A."/>
            <person name="Kaine B.P."/>
            <person name="Borodovsky M."/>
            <person name="Klenk H.-P."/>
            <person name="Fraser C.M."/>
            <person name="Smith H.O."/>
            <person name="Woese C.R."/>
            <person name="Venter J.C."/>
        </authorList>
    </citation>
    <scope>NUCLEOTIDE SEQUENCE [LARGE SCALE GENOMIC DNA]</scope>
    <source>
        <strain>ATCC 43067 / DSM 2661 / JAL-1 / JCM 10045 / NBRC 100440</strain>
    </source>
</reference>
<proteinExistence type="predicted"/>
<keyword id="KW-1185">Reference proteome</keyword>
<gene>
    <name type="ordered locus">MJ0638</name>
</gene>
<organism>
    <name type="scientific">Methanocaldococcus jannaschii (strain ATCC 43067 / DSM 2661 / JAL-1 / JCM 10045 / NBRC 100440)</name>
    <name type="common">Methanococcus jannaschii</name>
    <dbReference type="NCBI Taxonomy" id="243232"/>
    <lineage>
        <taxon>Archaea</taxon>
        <taxon>Methanobacteriati</taxon>
        <taxon>Methanobacteriota</taxon>
        <taxon>Methanomada group</taxon>
        <taxon>Methanococci</taxon>
        <taxon>Methanococcales</taxon>
        <taxon>Methanocaldococcaceae</taxon>
        <taxon>Methanocaldococcus</taxon>
    </lineage>
</organism>